<reference key="1">
    <citation type="submission" date="2008-10" db="EMBL/GenBank/DDBJ databases">
        <title>Genome sequence of Bacillus cereus AH187.</title>
        <authorList>
            <person name="Dodson R.J."/>
            <person name="Durkin A.S."/>
            <person name="Rosovitz M.J."/>
            <person name="Rasko D.A."/>
            <person name="Kolsto A.B."/>
            <person name="Okstad O.A."/>
            <person name="Ravel J."/>
            <person name="Sutton G."/>
        </authorList>
    </citation>
    <scope>NUCLEOTIDE SEQUENCE [LARGE SCALE GENOMIC DNA]</scope>
    <source>
        <strain>AH187</strain>
    </source>
</reference>
<organism>
    <name type="scientific">Bacillus cereus (strain AH187)</name>
    <dbReference type="NCBI Taxonomy" id="405534"/>
    <lineage>
        <taxon>Bacteria</taxon>
        <taxon>Bacillati</taxon>
        <taxon>Bacillota</taxon>
        <taxon>Bacilli</taxon>
        <taxon>Bacillales</taxon>
        <taxon>Bacillaceae</taxon>
        <taxon>Bacillus</taxon>
        <taxon>Bacillus cereus group</taxon>
    </lineage>
</organism>
<evidence type="ECO:0000255" key="1">
    <source>
        <dbReference type="HAMAP-Rule" id="MF_01343"/>
    </source>
</evidence>
<evidence type="ECO:0000305" key="2"/>
<keyword id="KW-0687">Ribonucleoprotein</keyword>
<keyword id="KW-0689">Ribosomal protein</keyword>
<keyword id="KW-0694">RNA-binding</keyword>
<keyword id="KW-0699">rRNA-binding</keyword>
<dbReference type="EMBL" id="CP001177">
    <property type="protein sequence ID" value="ACJ78409.1"/>
    <property type="molecule type" value="Genomic_DNA"/>
</dbReference>
<dbReference type="SMR" id="B7HLE1"/>
<dbReference type="KEGG" id="bcr:BCAH187_A3855"/>
<dbReference type="HOGENOM" id="CLU_148518_0_0_9"/>
<dbReference type="Proteomes" id="UP000002214">
    <property type="component" value="Chromosome"/>
</dbReference>
<dbReference type="GO" id="GO:0022627">
    <property type="term" value="C:cytosolic small ribosomal subunit"/>
    <property type="evidence" value="ECO:0007669"/>
    <property type="project" value="TreeGrafter"/>
</dbReference>
<dbReference type="GO" id="GO:0019843">
    <property type="term" value="F:rRNA binding"/>
    <property type="evidence" value="ECO:0007669"/>
    <property type="project" value="UniProtKB-UniRule"/>
</dbReference>
<dbReference type="GO" id="GO:0003735">
    <property type="term" value="F:structural constituent of ribosome"/>
    <property type="evidence" value="ECO:0007669"/>
    <property type="project" value="InterPro"/>
</dbReference>
<dbReference type="GO" id="GO:0006412">
    <property type="term" value="P:translation"/>
    <property type="evidence" value="ECO:0007669"/>
    <property type="project" value="UniProtKB-UniRule"/>
</dbReference>
<dbReference type="CDD" id="cd00353">
    <property type="entry name" value="Ribosomal_S15p_S13e"/>
    <property type="match status" value="1"/>
</dbReference>
<dbReference type="FunFam" id="1.10.287.10:FF:000002">
    <property type="entry name" value="30S ribosomal protein S15"/>
    <property type="match status" value="1"/>
</dbReference>
<dbReference type="Gene3D" id="6.10.250.3130">
    <property type="match status" value="1"/>
</dbReference>
<dbReference type="Gene3D" id="1.10.287.10">
    <property type="entry name" value="S15/NS1, RNA-binding"/>
    <property type="match status" value="1"/>
</dbReference>
<dbReference type="HAMAP" id="MF_01343_B">
    <property type="entry name" value="Ribosomal_uS15_B"/>
    <property type="match status" value="1"/>
</dbReference>
<dbReference type="InterPro" id="IPR000589">
    <property type="entry name" value="Ribosomal_uS15"/>
</dbReference>
<dbReference type="InterPro" id="IPR005290">
    <property type="entry name" value="Ribosomal_uS15_bac-type"/>
</dbReference>
<dbReference type="InterPro" id="IPR009068">
    <property type="entry name" value="uS15_NS1_RNA-bd_sf"/>
</dbReference>
<dbReference type="NCBIfam" id="TIGR00952">
    <property type="entry name" value="S15_bact"/>
    <property type="match status" value="1"/>
</dbReference>
<dbReference type="PANTHER" id="PTHR23321">
    <property type="entry name" value="RIBOSOMAL PROTEIN S15, BACTERIAL AND ORGANELLAR"/>
    <property type="match status" value="1"/>
</dbReference>
<dbReference type="PANTHER" id="PTHR23321:SF26">
    <property type="entry name" value="SMALL RIBOSOMAL SUBUNIT PROTEIN US15M"/>
    <property type="match status" value="1"/>
</dbReference>
<dbReference type="Pfam" id="PF00312">
    <property type="entry name" value="Ribosomal_S15"/>
    <property type="match status" value="1"/>
</dbReference>
<dbReference type="SMART" id="SM01387">
    <property type="entry name" value="Ribosomal_S15"/>
    <property type="match status" value="1"/>
</dbReference>
<dbReference type="SUPFAM" id="SSF47060">
    <property type="entry name" value="S15/NS1 RNA-binding domain"/>
    <property type="match status" value="1"/>
</dbReference>
<dbReference type="PROSITE" id="PS00362">
    <property type="entry name" value="RIBOSOMAL_S15"/>
    <property type="match status" value="1"/>
</dbReference>
<accession>B7HLE1</accession>
<sequence>MALTQERKNEIIAQFRTHETDTGSPEVQIAVLTEQINTLNEHLRTHKKDHHSRRGLLKMVGKRRNLLTYLRNSDITRYRELITKLGLRR</sequence>
<proteinExistence type="inferred from homology"/>
<name>RS15_BACC7</name>
<comment type="function">
    <text evidence="1">One of the primary rRNA binding proteins, it binds directly to 16S rRNA where it helps nucleate assembly of the platform of the 30S subunit by binding and bridging several RNA helices of the 16S rRNA.</text>
</comment>
<comment type="function">
    <text evidence="1">Forms an intersubunit bridge (bridge B4) with the 23S rRNA of the 50S subunit in the ribosome.</text>
</comment>
<comment type="subunit">
    <text evidence="1">Part of the 30S ribosomal subunit. Forms a bridge to the 50S subunit in the 70S ribosome, contacting the 23S rRNA.</text>
</comment>
<comment type="similarity">
    <text evidence="1">Belongs to the universal ribosomal protein uS15 family.</text>
</comment>
<feature type="chain" id="PRO_1000143076" description="Small ribosomal subunit protein uS15">
    <location>
        <begin position="1"/>
        <end position="89"/>
    </location>
</feature>
<gene>
    <name evidence="1" type="primary">rpsO</name>
    <name type="ordered locus">BCAH187_A3855</name>
</gene>
<protein>
    <recommendedName>
        <fullName evidence="1">Small ribosomal subunit protein uS15</fullName>
    </recommendedName>
    <alternativeName>
        <fullName evidence="2">30S ribosomal protein S15</fullName>
    </alternativeName>
</protein>